<accession>C1D4I5</accession>
<protein>
    <recommendedName>
        <fullName evidence="1">Thymidylate synthase</fullName>
        <shortName evidence="1">TS</shortName>
        <shortName evidence="1">TSase</shortName>
        <ecNumber evidence="1">2.1.1.45</ecNumber>
    </recommendedName>
</protein>
<organism>
    <name type="scientific">Laribacter hongkongensis (strain HLHK9)</name>
    <dbReference type="NCBI Taxonomy" id="557598"/>
    <lineage>
        <taxon>Bacteria</taxon>
        <taxon>Pseudomonadati</taxon>
        <taxon>Pseudomonadota</taxon>
        <taxon>Betaproteobacteria</taxon>
        <taxon>Neisseriales</taxon>
        <taxon>Aquaspirillaceae</taxon>
        <taxon>Laribacter</taxon>
    </lineage>
</organism>
<keyword id="KW-0963">Cytoplasm</keyword>
<keyword id="KW-0489">Methyltransferase</keyword>
<keyword id="KW-0545">Nucleotide biosynthesis</keyword>
<keyword id="KW-1185">Reference proteome</keyword>
<keyword id="KW-0808">Transferase</keyword>
<reference key="1">
    <citation type="journal article" date="2009" name="PLoS Genet.">
        <title>The complete genome and proteome of Laribacter hongkongensis reveal potential mechanisms for adaptations to different temperatures and habitats.</title>
        <authorList>
            <person name="Woo P.C.Y."/>
            <person name="Lau S.K.P."/>
            <person name="Tse H."/>
            <person name="Teng J.L.L."/>
            <person name="Curreem S.O."/>
            <person name="Tsang A.K.L."/>
            <person name="Fan R.Y.Y."/>
            <person name="Wong G.K.M."/>
            <person name="Huang Y."/>
            <person name="Loman N.J."/>
            <person name="Snyder L.A.S."/>
            <person name="Cai J.J."/>
            <person name="Huang J.-D."/>
            <person name="Mak W."/>
            <person name="Pallen M.J."/>
            <person name="Lok S."/>
            <person name="Yuen K.-Y."/>
        </authorList>
    </citation>
    <scope>NUCLEOTIDE SEQUENCE [LARGE SCALE GENOMIC DNA]</scope>
    <source>
        <strain>HLHK9</strain>
    </source>
</reference>
<feature type="chain" id="PRO_1000197249" description="Thymidylate synthase">
    <location>
        <begin position="1"/>
        <end position="264"/>
    </location>
</feature>
<feature type="active site" description="Nucleophile" evidence="1">
    <location>
        <position position="146"/>
    </location>
</feature>
<feature type="binding site" description="in other chain" evidence="1">
    <location>
        <position position="21"/>
    </location>
    <ligand>
        <name>dUMP</name>
        <dbReference type="ChEBI" id="CHEBI:246422"/>
        <note>ligand shared between dimeric partners</note>
    </ligand>
</feature>
<feature type="binding site" evidence="1">
    <location>
        <position position="51"/>
    </location>
    <ligand>
        <name>(6R)-5,10-methylene-5,6,7,8-tetrahydrofolate</name>
        <dbReference type="ChEBI" id="CHEBI:15636"/>
    </ligand>
</feature>
<feature type="binding site" evidence="1">
    <location>
        <begin position="126"/>
        <end position="127"/>
    </location>
    <ligand>
        <name>dUMP</name>
        <dbReference type="ChEBI" id="CHEBI:246422"/>
        <note>ligand shared between dimeric partners</note>
    </ligand>
</feature>
<feature type="binding site" description="in other chain" evidence="1">
    <location>
        <begin position="166"/>
        <end position="169"/>
    </location>
    <ligand>
        <name>dUMP</name>
        <dbReference type="ChEBI" id="CHEBI:246422"/>
        <note>ligand shared between dimeric partners</note>
    </ligand>
</feature>
<feature type="binding site" evidence="1">
    <location>
        <position position="169"/>
    </location>
    <ligand>
        <name>(6R)-5,10-methylene-5,6,7,8-tetrahydrofolate</name>
        <dbReference type="ChEBI" id="CHEBI:15636"/>
    </ligand>
</feature>
<feature type="binding site" description="in other chain" evidence="1">
    <location>
        <position position="177"/>
    </location>
    <ligand>
        <name>dUMP</name>
        <dbReference type="ChEBI" id="CHEBI:246422"/>
        <note>ligand shared between dimeric partners</note>
    </ligand>
</feature>
<feature type="binding site" description="in other chain" evidence="1">
    <location>
        <begin position="207"/>
        <end position="209"/>
    </location>
    <ligand>
        <name>dUMP</name>
        <dbReference type="ChEBI" id="CHEBI:246422"/>
        <note>ligand shared between dimeric partners</note>
    </ligand>
</feature>
<feature type="binding site" evidence="1">
    <location>
        <position position="263"/>
    </location>
    <ligand>
        <name>(6R)-5,10-methylene-5,6,7,8-tetrahydrofolate</name>
        <dbReference type="ChEBI" id="CHEBI:15636"/>
    </ligand>
</feature>
<dbReference type="EC" id="2.1.1.45" evidence="1"/>
<dbReference type="EMBL" id="CP001154">
    <property type="protein sequence ID" value="ACO73779.1"/>
    <property type="molecule type" value="Genomic_DNA"/>
</dbReference>
<dbReference type="RefSeq" id="WP_012696271.1">
    <property type="nucleotide sequence ID" value="NC_012559.1"/>
</dbReference>
<dbReference type="SMR" id="C1D4I5"/>
<dbReference type="STRING" id="557598.LHK_00786"/>
<dbReference type="KEGG" id="lhk:LHK_00786"/>
<dbReference type="eggNOG" id="COG0207">
    <property type="taxonomic scope" value="Bacteria"/>
</dbReference>
<dbReference type="HOGENOM" id="CLU_021669_0_0_4"/>
<dbReference type="UniPathway" id="UPA00575"/>
<dbReference type="Proteomes" id="UP000002010">
    <property type="component" value="Chromosome"/>
</dbReference>
<dbReference type="GO" id="GO:0005829">
    <property type="term" value="C:cytosol"/>
    <property type="evidence" value="ECO:0007669"/>
    <property type="project" value="TreeGrafter"/>
</dbReference>
<dbReference type="GO" id="GO:0004799">
    <property type="term" value="F:thymidylate synthase activity"/>
    <property type="evidence" value="ECO:0007669"/>
    <property type="project" value="UniProtKB-UniRule"/>
</dbReference>
<dbReference type="GO" id="GO:0006231">
    <property type="term" value="P:dTMP biosynthetic process"/>
    <property type="evidence" value="ECO:0007669"/>
    <property type="project" value="UniProtKB-UniRule"/>
</dbReference>
<dbReference type="GO" id="GO:0006235">
    <property type="term" value="P:dTTP biosynthetic process"/>
    <property type="evidence" value="ECO:0007669"/>
    <property type="project" value="UniProtKB-UniRule"/>
</dbReference>
<dbReference type="GO" id="GO:0032259">
    <property type="term" value="P:methylation"/>
    <property type="evidence" value="ECO:0007669"/>
    <property type="project" value="UniProtKB-KW"/>
</dbReference>
<dbReference type="CDD" id="cd00351">
    <property type="entry name" value="TS_Pyrimidine_HMase"/>
    <property type="match status" value="1"/>
</dbReference>
<dbReference type="FunFam" id="3.30.572.10:FF:000001">
    <property type="entry name" value="Thymidylate synthase"/>
    <property type="match status" value="1"/>
</dbReference>
<dbReference type="Gene3D" id="3.30.572.10">
    <property type="entry name" value="Thymidylate synthase/dCMP hydroxymethylase domain"/>
    <property type="match status" value="1"/>
</dbReference>
<dbReference type="HAMAP" id="MF_00008">
    <property type="entry name" value="Thymidy_synth_bact"/>
    <property type="match status" value="1"/>
</dbReference>
<dbReference type="InterPro" id="IPR045097">
    <property type="entry name" value="Thymidate_synth/dCMP_Mease"/>
</dbReference>
<dbReference type="InterPro" id="IPR023451">
    <property type="entry name" value="Thymidate_synth/dCMP_Mease_dom"/>
</dbReference>
<dbReference type="InterPro" id="IPR036926">
    <property type="entry name" value="Thymidate_synth/dCMP_Mease_sf"/>
</dbReference>
<dbReference type="InterPro" id="IPR000398">
    <property type="entry name" value="Thymidylate_synthase"/>
</dbReference>
<dbReference type="InterPro" id="IPR020940">
    <property type="entry name" value="Thymidylate_synthase_AS"/>
</dbReference>
<dbReference type="NCBIfam" id="NF002497">
    <property type="entry name" value="PRK01827.1-3"/>
    <property type="match status" value="1"/>
</dbReference>
<dbReference type="NCBIfam" id="NF002499">
    <property type="entry name" value="PRK01827.1-5"/>
    <property type="match status" value="1"/>
</dbReference>
<dbReference type="NCBIfam" id="TIGR03284">
    <property type="entry name" value="thym_sym"/>
    <property type="match status" value="2"/>
</dbReference>
<dbReference type="PANTHER" id="PTHR11548:SF9">
    <property type="entry name" value="THYMIDYLATE SYNTHASE"/>
    <property type="match status" value="1"/>
</dbReference>
<dbReference type="PANTHER" id="PTHR11548">
    <property type="entry name" value="THYMIDYLATE SYNTHASE 1"/>
    <property type="match status" value="1"/>
</dbReference>
<dbReference type="Pfam" id="PF00303">
    <property type="entry name" value="Thymidylat_synt"/>
    <property type="match status" value="1"/>
</dbReference>
<dbReference type="PRINTS" id="PR00108">
    <property type="entry name" value="THYMDSNTHASE"/>
</dbReference>
<dbReference type="SUPFAM" id="SSF55831">
    <property type="entry name" value="Thymidylate synthase/dCMP hydroxymethylase"/>
    <property type="match status" value="1"/>
</dbReference>
<dbReference type="PROSITE" id="PS00091">
    <property type="entry name" value="THYMIDYLATE_SYNTHASE"/>
    <property type="match status" value="1"/>
</dbReference>
<sequence length="264" mass="30221">MKAYLELMQHVLDHGTDKADRTGTGTRSVFGYQMRFDLAQGFPLLTTKKLHLRSIVHELLWFLAGDTNIRYLKDNGVRIWDEWADENGDLGPVYGYQWRSWPAPDGRHIDQISGLLDMIRRNPDSRRLIVSAWNPALVDDMALPPCHCLFQFYVADGKLSCQLYQRSADVFLGVPFNIASYALLTLMVAQVTGLQPGEFVHTFGDAHLYSNHFEQARLQLQREPRALPVMKLNPVVTDLFAFRFEDFTLEGYDPHPHIKAEVSV</sequence>
<gene>
    <name evidence="1" type="primary">thyA</name>
    <name type="ordered locus">LHK_00786</name>
</gene>
<proteinExistence type="inferred from homology"/>
<evidence type="ECO:0000255" key="1">
    <source>
        <dbReference type="HAMAP-Rule" id="MF_00008"/>
    </source>
</evidence>
<name>TYSY_LARHH</name>
<comment type="function">
    <text evidence="1">Catalyzes the reductive methylation of 2'-deoxyuridine-5'-monophosphate (dUMP) to 2'-deoxythymidine-5'-monophosphate (dTMP) while utilizing 5,10-methylenetetrahydrofolate (mTHF) as the methyl donor and reductant in the reaction, yielding dihydrofolate (DHF) as a by-product. This enzymatic reaction provides an intracellular de novo source of dTMP, an essential precursor for DNA biosynthesis.</text>
</comment>
<comment type="catalytic activity">
    <reaction evidence="1">
        <text>dUMP + (6R)-5,10-methylene-5,6,7,8-tetrahydrofolate = 7,8-dihydrofolate + dTMP</text>
        <dbReference type="Rhea" id="RHEA:12104"/>
        <dbReference type="ChEBI" id="CHEBI:15636"/>
        <dbReference type="ChEBI" id="CHEBI:57451"/>
        <dbReference type="ChEBI" id="CHEBI:63528"/>
        <dbReference type="ChEBI" id="CHEBI:246422"/>
        <dbReference type="EC" id="2.1.1.45"/>
    </reaction>
</comment>
<comment type="pathway">
    <text evidence="1">Pyrimidine metabolism; dTTP biosynthesis.</text>
</comment>
<comment type="subunit">
    <text evidence="1">Homodimer.</text>
</comment>
<comment type="subcellular location">
    <subcellularLocation>
        <location evidence="1">Cytoplasm</location>
    </subcellularLocation>
</comment>
<comment type="similarity">
    <text evidence="1">Belongs to the thymidylate synthase family. Bacterial-type ThyA subfamily.</text>
</comment>